<sequence>MSSLLSKTRRLNKILQKTGTEPVAFQDICTLLSEVLECNAYIVSKRGKVLGYTFSPGFECEAMKKKVIEDKKFPEDYNLTLLESNETLANLSNQGRCVFAEIGDCKTKDKISTIIPIIGSRERLGTLILARFGKEFTDDDLVLVEYSATIVGMEMLRALQEDLADQTRKKAVVQLAIGTLSYSELEAVEHIFEELNGNEGLLVASKIADKVGITRSVIVNALRKFESAGVIESRSLGMKGTYIRVLNEKLLDELKKIK</sequence>
<feature type="chain" id="PRO_1000130451" description="Global transcriptional regulator CodY">
    <location>
        <begin position="1"/>
        <end position="258"/>
    </location>
</feature>
<feature type="DNA-binding region" description="H-T-H motif" evidence="1">
    <location>
        <begin position="204"/>
        <end position="223"/>
    </location>
</feature>
<feature type="region of interest" description="GAF domain" evidence="1">
    <location>
        <begin position="1"/>
        <end position="156"/>
    </location>
</feature>
<evidence type="ECO:0000255" key="1">
    <source>
        <dbReference type="HAMAP-Rule" id="MF_00621"/>
    </source>
</evidence>
<comment type="function">
    <text evidence="1">DNA-binding global transcriptional regulator which is involved in the adaptive response to starvation and acts by directly or indirectly controlling the expression of numerous genes in response to nutrient availability. During rapid exponential growth, CodY is highly active and represses genes whose products allow adaptation to nutrient depletion.</text>
</comment>
<comment type="subcellular location">
    <subcellularLocation>
        <location evidence="1">Cytoplasm</location>
    </subcellularLocation>
</comment>
<comment type="similarity">
    <text evidence="1">Belongs to the CodY family.</text>
</comment>
<reference key="1">
    <citation type="submission" date="2008-05" db="EMBL/GenBank/DDBJ databases">
        <title>Complete genome sequence of Clostridium botulinum E3 str. Alaska E43.</title>
        <authorList>
            <person name="Brinkac L.M."/>
            <person name="Brown J.L."/>
            <person name="Bruce D."/>
            <person name="Detter C."/>
            <person name="Munk C."/>
            <person name="Smith L.A."/>
            <person name="Smith T.J."/>
            <person name="Sutton G."/>
            <person name="Brettin T.S."/>
        </authorList>
    </citation>
    <scope>NUCLEOTIDE SEQUENCE [LARGE SCALE GENOMIC DNA]</scope>
    <source>
        <strain>Alaska E43 / Type E3</strain>
    </source>
</reference>
<keyword id="KW-0963">Cytoplasm</keyword>
<keyword id="KW-0238">DNA-binding</keyword>
<keyword id="KW-0678">Repressor</keyword>
<keyword id="KW-0804">Transcription</keyword>
<keyword id="KW-0805">Transcription regulation</keyword>
<name>CODY_CLOBA</name>
<protein>
    <recommendedName>
        <fullName evidence="1">Global transcriptional regulator CodY</fullName>
    </recommendedName>
</protein>
<proteinExistence type="inferred from homology"/>
<gene>
    <name evidence="1" type="primary">codY</name>
    <name type="ordered locus">CLH_1208</name>
</gene>
<dbReference type="EMBL" id="CP001078">
    <property type="protein sequence ID" value="ACD51255.1"/>
    <property type="molecule type" value="Genomic_DNA"/>
</dbReference>
<dbReference type="RefSeq" id="WP_003369335.1">
    <property type="nucleotide sequence ID" value="NC_010723.1"/>
</dbReference>
<dbReference type="SMR" id="B2V4F3"/>
<dbReference type="KEGG" id="cbt:CLH_1208"/>
<dbReference type="HOGENOM" id="CLU_089581_0_0_9"/>
<dbReference type="GO" id="GO:0005737">
    <property type="term" value="C:cytoplasm"/>
    <property type="evidence" value="ECO:0007669"/>
    <property type="project" value="UniProtKB-SubCell"/>
</dbReference>
<dbReference type="GO" id="GO:0003677">
    <property type="term" value="F:DNA binding"/>
    <property type="evidence" value="ECO:0007669"/>
    <property type="project" value="UniProtKB-UniRule"/>
</dbReference>
<dbReference type="GO" id="GO:0003700">
    <property type="term" value="F:DNA-binding transcription factor activity"/>
    <property type="evidence" value="ECO:0007669"/>
    <property type="project" value="InterPro"/>
</dbReference>
<dbReference type="GO" id="GO:0005525">
    <property type="term" value="F:GTP binding"/>
    <property type="evidence" value="ECO:0007669"/>
    <property type="project" value="InterPro"/>
</dbReference>
<dbReference type="GO" id="GO:0045892">
    <property type="term" value="P:negative regulation of DNA-templated transcription"/>
    <property type="evidence" value="ECO:0007669"/>
    <property type="project" value="UniProtKB-UniRule"/>
</dbReference>
<dbReference type="FunFam" id="1.10.10.10:FF:000034">
    <property type="entry name" value="GTP-sensing transcriptional pleiotropic repressor CodY"/>
    <property type="match status" value="1"/>
</dbReference>
<dbReference type="Gene3D" id="3.30.450.40">
    <property type="match status" value="1"/>
</dbReference>
<dbReference type="Gene3D" id="1.10.10.10">
    <property type="entry name" value="Winged helix-like DNA-binding domain superfamily/Winged helix DNA-binding domain"/>
    <property type="match status" value="1"/>
</dbReference>
<dbReference type="HAMAP" id="MF_00621">
    <property type="entry name" value="HTH_type_CodY"/>
    <property type="match status" value="1"/>
</dbReference>
<dbReference type="InterPro" id="IPR014154">
    <property type="entry name" value="CodY"/>
</dbReference>
<dbReference type="InterPro" id="IPR029016">
    <property type="entry name" value="GAF-like_dom_sf"/>
</dbReference>
<dbReference type="InterPro" id="IPR013198">
    <property type="entry name" value="GTP_trans_reg_CodY_C"/>
</dbReference>
<dbReference type="InterPro" id="IPR010312">
    <property type="entry name" value="Transc_reg_CodY_N"/>
</dbReference>
<dbReference type="InterPro" id="IPR036388">
    <property type="entry name" value="WH-like_DNA-bd_sf"/>
</dbReference>
<dbReference type="InterPro" id="IPR036390">
    <property type="entry name" value="WH_DNA-bd_sf"/>
</dbReference>
<dbReference type="NCBIfam" id="TIGR02787">
    <property type="entry name" value="codY_Gpos"/>
    <property type="match status" value="1"/>
</dbReference>
<dbReference type="NCBIfam" id="NF003170">
    <property type="entry name" value="PRK04158.1"/>
    <property type="match status" value="1"/>
</dbReference>
<dbReference type="PANTHER" id="PTHR40062:SF1">
    <property type="entry name" value="GLOBAL TRANSCRIPTIONAL REGULATOR CODY"/>
    <property type="match status" value="1"/>
</dbReference>
<dbReference type="PANTHER" id="PTHR40062">
    <property type="entry name" value="GTP-SENSING TRANSCRIPTIONAL PLEIOTROPIC REPRESSOR CODY"/>
    <property type="match status" value="1"/>
</dbReference>
<dbReference type="Pfam" id="PF06018">
    <property type="entry name" value="CodY"/>
    <property type="match status" value="1"/>
</dbReference>
<dbReference type="Pfam" id="PF08222">
    <property type="entry name" value="HTH_CodY"/>
    <property type="match status" value="1"/>
</dbReference>
<dbReference type="PIRSF" id="PIRSF011572">
    <property type="entry name" value="GTP_sensing_CodY"/>
    <property type="match status" value="1"/>
</dbReference>
<dbReference type="SUPFAM" id="SSF46785">
    <property type="entry name" value="Winged helix' DNA-binding domain"/>
    <property type="match status" value="1"/>
</dbReference>
<accession>B2V4F3</accession>
<organism>
    <name type="scientific">Clostridium botulinum (strain Alaska E43 / Type E3)</name>
    <dbReference type="NCBI Taxonomy" id="508767"/>
    <lineage>
        <taxon>Bacteria</taxon>
        <taxon>Bacillati</taxon>
        <taxon>Bacillota</taxon>
        <taxon>Clostridia</taxon>
        <taxon>Eubacteriales</taxon>
        <taxon>Clostridiaceae</taxon>
        <taxon>Clostridium</taxon>
    </lineage>
</organism>